<accession>Q931T2</accession>
<dbReference type="EC" id="2.3.1.-" evidence="1"/>
<dbReference type="EMBL" id="BA000017">
    <property type="protein sequence ID" value="BAB57338.1"/>
    <property type="molecule type" value="Genomic_DNA"/>
</dbReference>
<dbReference type="RefSeq" id="WP_001289712.1">
    <property type="nucleotide sequence ID" value="NC_002758.2"/>
</dbReference>
<dbReference type="SMR" id="Q931T2"/>
<dbReference type="KEGG" id="sav:SAV1176"/>
<dbReference type="HOGENOM" id="CLU_136634_0_0_9"/>
<dbReference type="PhylomeDB" id="Q931T2"/>
<dbReference type="Proteomes" id="UP000002481">
    <property type="component" value="Chromosome"/>
</dbReference>
<dbReference type="GO" id="GO:0016747">
    <property type="term" value="F:acyltransferase activity, transferring groups other than amino-acyl groups"/>
    <property type="evidence" value="ECO:0007669"/>
    <property type="project" value="UniProtKB-UniRule"/>
</dbReference>
<dbReference type="CDD" id="cd04301">
    <property type="entry name" value="NAT_SF"/>
    <property type="match status" value="1"/>
</dbReference>
<dbReference type="Gene3D" id="3.40.630.30">
    <property type="match status" value="1"/>
</dbReference>
<dbReference type="HAMAP" id="MF_00824">
    <property type="entry name" value="Acetyltransf_YlbP"/>
    <property type="match status" value="1"/>
</dbReference>
<dbReference type="InterPro" id="IPR016181">
    <property type="entry name" value="Acyl_CoA_acyltransferase"/>
</dbReference>
<dbReference type="InterPro" id="IPR000182">
    <property type="entry name" value="GNAT_dom"/>
</dbReference>
<dbReference type="InterPro" id="IPR017274">
    <property type="entry name" value="YlbP"/>
</dbReference>
<dbReference type="NCBIfam" id="NF010241">
    <property type="entry name" value="PRK13688.1"/>
    <property type="match status" value="1"/>
</dbReference>
<dbReference type="PIRSF" id="PIRSF037732">
    <property type="entry name" value="YlbP_prd"/>
    <property type="match status" value="1"/>
</dbReference>
<dbReference type="SUPFAM" id="SSF55729">
    <property type="entry name" value="Acyl-CoA N-acyltransferases (Nat)"/>
    <property type="match status" value="1"/>
</dbReference>
<dbReference type="PROSITE" id="PS51186">
    <property type="entry name" value="GNAT"/>
    <property type="match status" value="1"/>
</dbReference>
<evidence type="ECO:0000255" key="1">
    <source>
        <dbReference type="HAMAP-Rule" id="MF_00824"/>
    </source>
</evidence>
<feature type="chain" id="PRO_0000232485" description="Uncharacterized N-acetyltransferase SAV1176">
    <location>
        <begin position="1"/>
        <end position="148"/>
    </location>
</feature>
<feature type="domain" description="N-acetyltransferase" evidence="1">
    <location>
        <begin position="7"/>
        <end position="148"/>
    </location>
</feature>
<reference key="1">
    <citation type="journal article" date="2001" name="Lancet">
        <title>Whole genome sequencing of meticillin-resistant Staphylococcus aureus.</title>
        <authorList>
            <person name="Kuroda M."/>
            <person name="Ohta T."/>
            <person name="Uchiyama I."/>
            <person name="Baba T."/>
            <person name="Yuzawa H."/>
            <person name="Kobayashi I."/>
            <person name="Cui L."/>
            <person name="Oguchi A."/>
            <person name="Aoki K."/>
            <person name="Nagai Y."/>
            <person name="Lian J.-Q."/>
            <person name="Ito T."/>
            <person name="Kanamori M."/>
            <person name="Matsumaru H."/>
            <person name="Maruyama A."/>
            <person name="Murakami H."/>
            <person name="Hosoyama A."/>
            <person name="Mizutani-Ui Y."/>
            <person name="Takahashi N.K."/>
            <person name="Sawano T."/>
            <person name="Inoue R."/>
            <person name="Kaito C."/>
            <person name="Sekimizu K."/>
            <person name="Hirakawa H."/>
            <person name="Kuhara S."/>
            <person name="Goto S."/>
            <person name="Yabuzaki J."/>
            <person name="Kanehisa M."/>
            <person name="Yamashita A."/>
            <person name="Oshima K."/>
            <person name="Furuya K."/>
            <person name="Yoshino C."/>
            <person name="Shiba T."/>
            <person name="Hattori M."/>
            <person name="Ogasawara N."/>
            <person name="Hayashi H."/>
            <person name="Hiramatsu K."/>
        </authorList>
    </citation>
    <scope>NUCLEOTIDE SEQUENCE [LARGE SCALE GENOMIC DNA]</scope>
    <source>
        <strain>Mu50 / ATCC 700699</strain>
    </source>
</reference>
<organism>
    <name type="scientific">Staphylococcus aureus (strain Mu50 / ATCC 700699)</name>
    <dbReference type="NCBI Taxonomy" id="158878"/>
    <lineage>
        <taxon>Bacteria</taxon>
        <taxon>Bacillati</taxon>
        <taxon>Bacillota</taxon>
        <taxon>Bacilli</taxon>
        <taxon>Bacillales</taxon>
        <taxon>Staphylococcaceae</taxon>
        <taxon>Staphylococcus</taxon>
    </lineage>
</organism>
<name>Y1176_STAAM</name>
<proteinExistence type="inferred from homology"/>
<sequence>MSEIKRLEINYKTDELFENFRAFGNKDLYMVNELNGQMIDASSDSPFYGIFVGDQLGARMALLKKGDVEEIYFPDFEDYILLWKLEVLPKYQNRGYASELIDFAKSFNMPIKAIGRNDSKDFFLHHGFTDVEAKNIEGHDVLLWKPIR</sequence>
<gene>
    <name type="ordered locus">SAV1176</name>
</gene>
<keyword id="KW-0012">Acyltransferase</keyword>
<keyword id="KW-0808">Transferase</keyword>
<protein>
    <recommendedName>
        <fullName evidence="1">Uncharacterized N-acetyltransferase SAV1176</fullName>
        <ecNumber evidence="1">2.3.1.-</ecNumber>
    </recommendedName>
</protein>